<feature type="chain" id="PRO_1000133108" description="Phosphopentomutase">
    <location>
        <begin position="1"/>
        <end position="406"/>
    </location>
</feature>
<feature type="binding site" evidence="1">
    <location>
        <position position="10"/>
    </location>
    <ligand>
        <name>Mn(2+)</name>
        <dbReference type="ChEBI" id="CHEBI:29035"/>
        <label>1</label>
    </ligand>
</feature>
<feature type="binding site" evidence="1">
    <location>
        <position position="305"/>
    </location>
    <ligand>
        <name>Mn(2+)</name>
        <dbReference type="ChEBI" id="CHEBI:29035"/>
        <label>2</label>
    </ligand>
</feature>
<feature type="binding site" evidence="1">
    <location>
        <position position="310"/>
    </location>
    <ligand>
        <name>Mn(2+)</name>
        <dbReference type="ChEBI" id="CHEBI:29035"/>
        <label>2</label>
    </ligand>
</feature>
<feature type="binding site" evidence="1">
    <location>
        <position position="346"/>
    </location>
    <ligand>
        <name>Mn(2+)</name>
        <dbReference type="ChEBI" id="CHEBI:29035"/>
        <label>1</label>
    </ligand>
</feature>
<feature type="binding site" evidence="1">
    <location>
        <position position="347"/>
    </location>
    <ligand>
        <name>Mn(2+)</name>
        <dbReference type="ChEBI" id="CHEBI:29035"/>
        <label>1</label>
    </ligand>
</feature>
<feature type="binding site" evidence="1">
    <location>
        <position position="358"/>
    </location>
    <ligand>
        <name>Mn(2+)</name>
        <dbReference type="ChEBI" id="CHEBI:29035"/>
        <label>2</label>
    </ligand>
</feature>
<organism>
    <name type="scientific">Aliivibrio fischeri (strain MJ11)</name>
    <name type="common">Vibrio fischeri</name>
    <dbReference type="NCBI Taxonomy" id="388396"/>
    <lineage>
        <taxon>Bacteria</taxon>
        <taxon>Pseudomonadati</taxon>
        <taxon>Pseudomonadota</taxon>
        <taxon>Gammaproteobacteria</taxon>
        <taxon>Vibrionales</taxon>
        <taxon>Vibrionaceae</taxon>
        <taxon>Aliivibrio</taxon>
    </lineage>
</organism>
<gene>
    <name evidence="1" type="primary">deoB</name>
    <name type="ordered locus">VFMJ11_0508</name>
</gene>
<evidence type="ECO:0000255" key="1">
    <source>
        <dbReference type="HAMAP-Rule" id="MF_00740"/>
    </source>
</evidence>
<comment type="function">
    <text evidence="1">Isomerase that catalyzes the conversion of deoxy-ribose 1-phosphate (dRib-1-P) and ribose 1-phosphate (Rib-1-P) to deoxy-ribose 5-phosphate (dRib-5-P) and ribose 5-phosphate (Rib-5-P), respectively.</text>
</comment>
<comment type="catalytic activity">
    <reaction evidence="1">
        <text>2-deoxy-alpha-D-ribose 1-phosphate = 2-deoxy-D-ribose 5-phosphate</text>
        <dbReference type="Rhea" id="RHEA:27658"/>
        <dbReference type="ChEBI" id="CHEBI:57259"/>
        <dbReference type="ChEBI" id="CHEBI:62877"/>
        <dbReference type="EC" id="5.4.2.7"/>
    </reaction>
</comment>
<comment type="catalytic activity">
    <reaction evidence="1">
        <text>alpha-D-ribose 1-phosphate = D-ribose 5-phosphate</text>
        <dbReference type="Rhea" id="RHEA:18793"/>
        <dbReference type="ChEBI" id="CHEBI:57720"/>
        <dbReference type="ChEBI" id="CHEBI:78346"/>
        <dbReference type="EC" id="5.4.2.7"/>
    </reaction>
</comment>
<comment type="cofactor">
    <cofactor evidence="1">
        <name>Mn(2+)</name>
        <dbReference type="ChEBI" id="CHEBI:29035"/>
    </cofactor>
    <text evidence="1">Binds 2 manganese ions.</text>
</comment>
<comment type="pathway">
    <text evidence="1">Carbohydrate degradation; 2-deoxy-D-ribose 1-phosphate degradation; D-glyceraldehyde 3-phosphate and acetaldehyde from 2-deoxy-alpha-D-ribose 1-phosphate: step 1/2.</text>
</comment>
<comment type="subcellular location">
    <subcellularLocation>
        <location evidence="1">Cytoplasm</location>
    </subcellularLocation>
</comment>
<comment type="similarity">
    <text evidence="1">Belongs to the phosphopentomutase family.</text>
</comment>
<accession>B5FAA0</accession>
<reference key="1">
    <citation type="submission" date="2008-08" db="EMBL/GenBank/DDBJ databases">
        <title>Complete sequence of Vibrio fischeri strain MJ11.</title>
        <authorList>
            <person name="Mandel M.J."/>
            <person name="Stabb E.V."/>
            <person name="Ruby E.G."/>
            <person name="Ferriera S."/>
            <person name="Johnson J."/>
            <person name="Kravitz S."/>
            <person name="Beeson K."/>
            <person name="Sutton G."/>
            <person name="Rogers Y.-H."/>
            <person name="Friedman R."/>
            <person name="Frazier M."/>
            <person name="Venter J.C."/>
        </authorList>
    </citation>
    <scope>NUCLEOTIDE SEQUENCE [LARGE SCALE GENOMIC DNA]</scope>
    <source>
        <strain>MJ11</strain>
    </source>
</reference>
<sequence>MKRAIILVLDSFGIGAAGDADKFGDVGSDTMGHIAEQCDKGLADNGNRKGSLTLPNLSKLGLAMAGKESTGKFSAGLDANAEIIGAYGHAAELSSGKDTPSGHWEIAGVPVLFDWGYFTDKENSFPKELTDRILERANLPGYLGNCHASGTQVLDDLGEEHMKTGMPIFYTSADSVFQIACHEETFGLDNLLTLCQIAREELEDYNIGRVIARPFIGPGKGQFERTGNRRDLSVEPPAATILQKLVDEKGGQVHSIGKISDIYAGCGITKKTKATGIPALFDATKEAIEQAGDNTIVFTNFVDFDSAYGHRRDVAGYAAALEYFDGRLPEIMDMLQEDDILILTADHGCDPTWPGTDHTREHIPVLVYGHKVPAGSLGRRDTFADIGQTLAEYFETSDMEYGKSFL</sequence>
<protein>
    <recommendedName>
        <fullName evidence="1">Phosphopentomutase</fullName>
        <ecNumber evidence="1">5.4.2.7</ecNumber>
    </recommendedName>
    <alternativeName>
        <fullName evidence="1">Phosphodeoxyribomutase</fullName>
    </alternativeName>
</protein>
<name>DEOB_ALIFM</name>
<keyword id="KW-0963">Cytoplasm</keyword>
<keyword id="KW-0413">Isomerase</keyword>
<keyword id="KW-0464">Manganese</keyword>
<keyword id="KW-0479">Metal-binding</keyword>
<dbReference type="EC" id="5.4.2.7" evidence="1"/>
<dbReference type="EMBL" id="CP001139">
    <property type="protein sequence ID" value="ACH66594.1"/>
    <property type="molecule type" value="Genomic_DNA"/>
</dbReference>
<dbReference type="RefSeq" id="WP_012533845.1">
    <property type="nucleotide sequence ID" value="NC_011184.1"/>
</dbReference>
<dbReference type="SMR" id="B5FAA0"/>
<dbReference type="KEGG" id="vfm:VFMJ11_0508"/>
<dbReference type="HOGENOM" id="CLU_053861_0_0_6"/>
<dbReference type="UniPathway" id="UPA00002">
    <property type="reaction ID" value="UER00467"/>
</dbReference>
<dbReference type="Proteomes" id="UP000001857">
    <property type="component" value="Chromosome I"/>
</dbReference>
<dbReference type="GO" id="GO:0005829">
    <property type="term" value="C:cytosol"/>
    <property type="evidence" value="ECO:0007669"/>
    <property type="project" value="TreeGrafter"/>
</dbReference>
<dbReference type="GO" id="GO:0000287">
    <property type="term" value="F:magnesium ion binding"/>
    <property type="evidence" value="ECO:0007669"/>
    <property type="project" value="InterPro"/>
</dbReference>
<dbReference type="GO" id="GO:0030145">
    <property type="term" value="F:manganese ion binding"/>
    <property type="evidence" value="ECO:0007669"/>
    <property type="project" value="UniProtKB-UniRule"/>
</dbReference>
<dbReference type="GO" id="GO:0008973">
    <property type="term" value="F:phosphopentomutase activity"/>
    <property type="evidence" value="ECO:0007669"/>
    <property type="project" value="UniProtKB-UniRule"/>
</dbReference>
<dbReference type="GO" id="GO:0006018">
    <property type="term" value="P:2-deoxyribose 1-phosphate catabolic process"/>
    <property type="evidence" value="ECO:0007669"/>
    <property type="project" value="UniProtKB-UniRule"/>
</dbReference>
<dbReference type="GO" id="GO:0006015">
    <property type="term" value="P:5-phosphoribose 1-diphosphate biosynthetic process"/>
    <property type="evidence" value="ECO:0007669"/>
    <property type="project" value="UniProtKB-UniPathway"/>
</dbReference>
<dbReference type="GO" id="GO:0043094">
    <property type="term" value="P:metabolic compound salvage"/>
    <property type="evidence" value="ECO:0007669"/>
    <property type="project" value="InterPro"/>
</dbReference>
<dbReference type="GO" id="GO:0009117">
    <property type="term" value="P:nucleotide metabolic process"/>
    <property type="evidence" value="ECO:0007669"/>
    <property type="project" value="InterPro"/>
</dbReference>
<dbReference type="CDD" id="cd16009">
    <property type="entry name" value="PPM"/>
    <property type="match status" value="1"/>
</dbReference>
<dbReference type="FunFam" id="3.30.70.1250:FF:000001">
    <property type="entry name" value="Phosphopentomutase"/>
    <property type="match status" value="1"/>
</dbReference>
<dbReference type="Gene3D" id="3.40.720.10">
    <property type="entry name" value="Alkaline Phosphatase, subunit A"/>
    <property type="match status" value="1"/>
</dbReference>
<dbReference type="Gene3D" id="3.30.70.1250">
    <property type="entry name" value="Phosphopentomutase"/>
    <property type="match status" value="1"/>
</dbReference>
<dbReference type="HAMAP" id="MF_00740">
    <property type="entry name" value="Phosphopentomut"/>
    <property type="match status" value="1"/>
</dbReference>
<dbReference type="InterPro" id="IPR017850">
    <property type="entry name" value="Alkaline_phosphatase_core_sf"/>
</dbReference>
<dbReference type="InterPro" id="IPR010045">
    <property type="entry name" value="DeoB"/>
</dbReference>
<dbReference type="InterPro" id="IPR006124">
    <property type="entry name" value="Metalloenzyme"/>
</dbReference>
<dbReference type="InterPro" id="IPR024052">
    <property type="entry name" value="Phosphopentomutase_DeoB_cap_sf"/>
</dbReference>
<dbReference type="NCBIfam" id="TIGR01696">
    <property type="entry name" value="deoB"/>
    <property type="match status" value="1"/>
</dbReference>
<dbReference type="NCBIfam" id="NF003766">
    <property type="entry name" value="PRK05362.1"/>
    <property type="match status" value="1"/>
</dbReference>
<dbReference type="PANTHER" id="PTHR21110">
    <property type="entry name" value="PHOSPHOPENTOMUTASE"/>
    <property type="match status" value="1"/>
</dbReference>
<dbReference type="PANTHER" id="PTHR21110:SF0">
    <property type="entry name" value="PHOSPHOPENTOMUTASE"/>
    <property type="match status" value="1"/>
</dbReference>
<dbReference type="Pfam" id="PF01676">
    <property type="entry name" value="Metalloenzyme"/>
    <property type="match status" value="1"/>
</dbReference>
<dbReference type="PIRSF" id="PIRSF001491">
    <property type="entry name" value="Ppentomutase"/>
    <property type="match status" value="1"/>
</dbReference>
<dbReference type="SUPFAM" id="SSF53649">
    <property type="entry name" value="Alkaline phosphatase-like"/>
    <property type="match status" value="1"/>
</dbReference>
<dbReference type="SUPFAM" id="SSF143856">
    <property type="entry name" value="DeoB insert domain-like"/>
    <property type="match status" value="1"/>
</dbReference>
<proteinExistence type="inferred from homology"/>